<comment type="function">
    <text evidence="1">Neuropeptides that play a significant role in the regulation of food intake and sleep-wakefulness, possibly by coordinating the complex behavioral and physiologic responses of these complementary homeostatic functions. A broader role in the homeostatic regulation of energy metabolism, autonomic function, hormonal balance and the regulation of body fluids, is also suggested.</text>
</comment>
<comment type="function">
    <molecule>Orexin-A</molecule>
    <text evidence="1">Binds to orexin receptors HCRTR1/OX1R and HCRTR2/OX2R with a high affinity (By similarity). Stimulates food intake (By similarity). Modulates pituitary luteinizing hormone secretion in an ovarian steroid-dependent manner (By similarity).</text>
</comment>
<comment type="function">
    <molecule>Orexin-B</molecule>
    <text evidence="1">Binds to orexin receptor HCRTR2/OX2R only (By similarity). Stimulates food intake (By similarity). Modulates pituitary luteinizing hormone secretion in an ovarian steroid-dependent manner (By similarity).</text>
</comment>
<comment type="subcellular location">
    <subcellularLocation>
        <location evidence="1">Rough endoplasmic reticulum</location>
    </subcellularLocation>
    <subcellularLocation>
        <location evidence="1">Cytoplasmic vesicle</location>
    </subcellularLocation>
    <subcellularLocation>
        <location evidence="1">Synapse</location>
    </subcellularLocation>
    <text evidence="1">Associated with perikaryal rough endoplasmic reticulum as well as cytoplasmic large granular vesicles at synapses.</text>
</comment>
<comment type="tissue specificity">
    <text>Restricted to neuronal cell bodies of the dorsal and lateral hypothalamus.</text>
</comment>
<comment type="PTM">
    <text>Specific enzymatic cleavages at paired basic residues yield the different active peptides.</text>
</comment>
<comment type="similarity">
    <text evidence="4">Belongs to the orexin family.</text>
</comment>
<comment type="online information" name="Protein Spotlight">
    <link uri="https://www.proteinspotlight.org/back_issues/015"/>
    <text>Qui dort dine - Issue 15 of October 2001</text>
</comment>
<protein>
    <recommendedName>
        <fullName evidence="1">Hypocretin neuropeptide precursor</fullName>
    </recommendedName>
    <alternativeName>
        <fullName evidence="2">Hypocretin</fullName>
        <shortName evidence="2">Hcrt</shortName>
    </alternativeName>
    <alternativeName>
        <fullName evidence="3">Orexin precursor</fullName>
    </alternativeName>
    <alternativeName>
        <fullName evidence="1">Prepro-orexin</fullName>
    </alternativeName>
    <alternativeName>
        <fullName evidence="2">Preprohypocretin</fullName>
    </alternativeName>
    <component>
        <recommendedName>
            <fullName evidence="3">Orexin-A</fullName>
        </recommendedName>
        <alternativeName>
            <fullName evidence="2">Hypocretin-1</fullName>
            <shortName evidence="2">Hcrt1</shortName>
        </alternativeName>
    </component>
    <component>
        <recommendedName>
            <fullName evidence="3">Orexin-B</fullName>
        </recommendedName>
        <alternativeName>
            <fullName evidence="2">Hypocretin-2</fullName>
            <shortName evidence="2">Hcrt2</shortName>
        </alternativeName>
    </component>
</protein>
<reference key="1">
    <citation type="journal article" date="1998" name="Cell">
        <title>Orexins and orexin receptors: a family of hypothalamic neuropeptides and G protein-coupled receptors that regulate feeding behavior.</title>
        <authorList>
            <person name="Sakurai T."/>
            <person name="Amemiya A."/>
            <person name="Ishii M."/>
            <person name="Matsuzaki I."/>
            <person name="Chemelli R.M."/>
            <person name="Tanaka H."/>
            <person name="Williams S.C."/>
            <person name="Richardson J.A."/>
            <person name="Kozlowski G.P."/>
            <person name="Wilson S."/>
            <person name="Arch J.R.S."/>
            <person name="Buckingham R.E."/>
            <person name="Haynes A.C."/>
            <person name="Carr S.A."/>
            <person name="Annan R.S."/>
            <person name="McNulty D.E."/>
            <person name="Liu W.-S."/>
            <person name="Terrett J.A."/>
            <person name="Elshourbagy N.A."/>
            <person name="Bergsma D.J."/>
            <person name="Yanagisawa M."/>
        </authorList>
    </citation>
    <scope>NUCLEOTIDE SEQUENCE [MRNA]</scope>
</reference>
<reference key="2">
    <citation type="journal article" date="1998" name="Proc. Natl. Acad. Sci. U.S.A.">
        <title>The hypocretins: hypothalamus-specific peptides with neuroexcitatory activity.</title>
        <authorList>
            <person name="de Lecea L."/>
            <person name="Kilduff T.S."/>
            <person name="Peyron C."/>
            <person name="Gao X.-B."/>
            <person name="Foye P.E."/>
            <person name="Danielson P.E."/>
            <person name="Fukuhara C."/>
            <person name="Battenberg E.L.F."/>
            <person name="Gautvik V.T."/>
            <person name="Bartlett F.S. II"/>
            <person name="Frankel W.N."/>
            <person name="van den Pol A.N."/>
            <person name="Bloom F.E."/>
            <person name="Gautvik K.M."/>
            <person name="Sutcliffe J.G."/>
        </authorList>
    </citation>
    <scope>NUCLEOTIDE SEQUENCE [MRNA]</scope>
    <source>
        <strain>C57BL/6J</strain>
    </source>
</reference>
<reference key="3">
    <citation type="journal article" date="2001" name="Bioessays">
        <title>Hypocretin/orexin, sleep and narcolepsy.</title>
        <authorList>
            <person name="Hungs M."/>
            <person name="Mignot E."/>
        </authorList>
    </citation>
    <scope>REVIEW</scope>
</reference>
<reference key="4">
    <citation type="journal article" date="2001" name="Annu. Rev. Neurosci.">
        <title>To eat or to sleep? Orexin in the regulation of feeding and wakefulness.</title>
        <authorList>
            <person name="Willie J.T."/>
            <person name="Chemelli R.M."/>
            <person name="Sinton C.M."/>
            <person name="Yanagisawa M."/>
        </authorList>
    </citation>
    <scope>REVIEW</scope>
</reference>
<dbReference type="EMBL" id="AF041242">
    <property type="protein sequence ID" value="AAC40040.1"/>
    <property type="molecule type" value="mRNA"/>
</dbReference>
<dbReference type="EMBL" id="AF019566">
    <property type="protein sequence ID" value="AAC02934.1"/>
    <property type="molecule type" value="mRNA"/>
</dbReference>
<dbReference type="CCDS" id="CCDS25436.1"/>
<dbReference type="RefSeq" id="NP_034540.1">
    <property type="nucleotide sequence ID" value="NM_010410.2"/>
</dbReference>
<dbReference type="FunCoup" id="O55241">
    <property type="interactions" value="491"/>
</dbReference>
<dbReference type="STRING" id="10090.ENSMUSP00000057578"/>
<dbReference type="jPOST" id="O55241"/>
<dbReference type="PaxDb" id="10090-ENSMUSP00000057578"/>
<dbReference type="ProteomicsDB" id="294109"/>
<dbReference type="Antibodypedia" id="3468">
    <property type="antibodies" value="345 antibodies from 34 providers"/>
</dbReference>
<dbReference type="DNASU" id="15171"/>
<dbReference type="Ensembl" id="ENSMUST00000055083.4">
    <property type="protein sequence ID" value="ENSMUSP00000057578.4"/>
    <property type="gene ID" value="ENSMUSG00000045471.5"/>
</dbReference>
<dbReference type="GeneID" id="15171"/>
<dbReference type="KEGG" id="mmu:15171"/>
<dbReference type="UCSC" id="uc007lmg.1">
    <property type="organism name" value="mouse"/>
</dbReference>
<dbReference type="AGR" id="MGI:1202306"/>
<dbReference type="CTD" id="3060"/>
<dbReference type="MGI" id="MGI:1202306">
    <property type="gene designation" value="Hcrt"/>
</dbReference>
<dbReference type="VEuPathDB" id="HostDB:ENSMUSG00000045471"/>
<dbReference type="eggNOG" id="ENOG502S83I">
    <property type="taxonomic scope" value="Eukaryota"/>
</dbReference>
<dbReference type="GeneTree" id="ENSGT00390000014272"/>
<dbReference type="HOGENOM" id="CLU_149027_1_0_1"/>
<dbReference type="InParanoid" id="O55241"/>
<dbReference type="OMA" id="HPCPGRR"/>
<dbReference type="OrthoDB" id="9379045at2759"/>
<dbReference type="PhylomeDB" id="O55241"/>
<dbReference type="TreeFam" id="TF330756"/>
<dbReference type="Reactome" id="R-MMU-389397">
    <property type="pathway name" value="Orexin and neuropeptides FF and QRFP bind to their respective receptors"/>
</dbReference>
<dbReference type="Reactome" id="R-MMU-416476">
    <property type="pathway name" value="G alpha (q) signalling events"/>
</dbReference>
<dbReference type="BioGRID-ORCS" id="15171">
    <property type="hits" value="5 hits in 78 CRISPR screens"/>
</dbReference>
<dbReference type="ChiTaRS" id="Hcrt">
    <property type="organism name" value="mouse"/>
</dbReference>
<dbReference type="PRO" id="PR:O55241"/>
<dbReference type="Proteomes" id="UP000000589">
    <property type="component" value="Chromosome 11"/>
</dbReference>
<dbReference type="RNAct" id="O55241">
    <property type="molecule type" value="protein"/>
</dbReference>
<dbReference type="Bgee" id="ENSMUSG00000045471">
    <property type="expression patterns" value="Expressed in dorsomedial nucleus of hypothalamus and 40 other cell types or tissues"/>
</dbReference>
<dbReference type="ExpressionAtlas" id="O55241">
    <property type="expression patterns" value="baseline and differential"/>
</dbReference>
<dbReference type="GO" id="GO:0099013">
    <property type="term" value="C:neuronal dense core vesicle lumen"/>
    <property type="evidence" value="ECO:0007669"/>
    <property type="project" value="Ensembl"/>
</dbReference>
<dbReference type="GO" id="GO:0048471">
    <property type="term" value="C:perinuclear region of cytoplasm"/>
    <property type="evidence" value="ECO:0000314"/>
    <property type="project" value="MGI"/>
</dbReference>
<dbReference type="GO" id="GO:0098794">
    <property type="term" value="C:postsynapse"/>
    <property type="evidence" value="ECO:0007669"/>
    <property type="project" value="GOC"/>
</dbReference>
<dbReference type="GO" id="GO:0005791">
    <property type="term" value="C:rough endoplasmic reticulum"/>
    <property type="evidence" value="ECO:0007669"/>
    <property type="project" value="UniProtKB-SubCell"/>
</dbReference>
<dbReference type="GO" id="GO:0005184">
    <property type="term" value="F:neuropeptide hormone activity"/>
    <property type="evidence" value="ECO:0007669"/>
    <property type="project" value="Ensembl"/>
</dbReference>
<dbReference type="GO" id="GO:0031771">
    <property type="term" value="F:type 1 orexin receptor binding"/>
    <property type="evidence" value="ECO:0007669"/>
    <property type="project" value="Ensembl"/>
</dbReference>
<dbReference type="GO" id="GO:0031772">
    <property type="term" value="F:type 2 orexin receptor binding"/>
    <property type="evidence" value="ECO:0007669"/>
    <property type="project" value="Ensembl"/>
</dbReference>
<dbReference type="GO" id="GO:0042755">
    <property type="term" value="P:eating behavior"/>
    <property type="evidence" value="ECO:0007669"/>
    <property type="project" value="Ensembl"/>
</dbReference>
<dbReference type="GO" id="GO:0060079">
    <property type="term" value="P:excitatory postsynaptic potential"/>
    <property type="evidence" value="ECO:0007669"/>
    <property type="project" value="Ensembl"/>
</dbReference>
<dbReference type="GO" id="GO:0008156">
    <property type="term" value="P:negative regulation of DNA replication"/>
    <property type="evidence" value="ECO:0007669"/>
    <property type="project" value="Ensembl"/>
</dbReference>
<dbReference type="GO" id="GO:0043267">
    <property type="term" value="P:negative regulation of potassium ion transport"/>
    <property type="evidence" value="ECO:0007669"/>
    <property type="project" value="Ensembl"/>
</dbReference>
<dbReference type="GO" id="GO:0051970">
    <property type="term" value="P:negative regulation of transmission of nerve impulse"/>
    <property type="evidence" value="ECO:0007669"/>
    <property type="project" value="Ensembl"/>
</dbReference>
<dbReference type="GO" id="GO:0007218">
    <property type="term" value="P:neuropeptide signaling pathway"/>
    <property type="evidence" value="ECO:0007669"/>
    <property type="project" value="UniProtKB-KW"/>
</dbReference>
<dbReference type="GO" id="GO:0007200">
    <property type="term" value="P:phospholipase C-activating G protein-coupled receptor signaling pathway"/>
    <property type="evidence" value="ECO:0007669"/>
    <property type="project" value="Ensembl"/>
</dbReference>
<dbReference type="GO" id="GO:0051928">
    <property type="term" value="P:positive regulation of calcium ion transport"/>
    <property type="evidence" value="ECO:0007669"/>
    <property type="project" value="Ensembl"/>
</dbReference>
<dbReference type="GO" id="GO:0120162">
    <property type="term" value="P:positive regulation of cold-induced thermogenesis"/>
    <property type="evidence" value="ECO:0000315"/>
    <property type="project" value="YuBioLab"/>
</dbReference>
<dbReference type="GO" id="GO:0007204">
    <property type="term" value="P:positive regulation of cytosolic calcium ion concentration"/>
    <property type="evidence" value="ECO:0007669"/>
    <property type="project" value="Ensembl"/>
</dbReference>
<dbReference type="GO" id="GO:0051971">
    <property type="term" value="P:positive regulation of transmission of nerve impulse"/>
    <property type="evidence" value="ECO:0007669"/>
    <property type="project" value="Ensembl"/>
</dbReference>
<dbReference type="GO" id="GO:0046928">
    <property type="term" value="P:regulation of neurotransmitter secretion"/>
    <property type="evidence" value="ECO:0007669"/>
    <property type="project" value="Ensembl"/>
</dbReference>
<dbReference type="GO" id="GO:0097305">
    <property type="term" value="P:response to alcohol"/>
    <property type="evidence" value="ECO:0007669"/>
    <property type="project" value="Ensembl"/>
</dbReference>
<dbReference type="GO" id="GO:0001659">
    <property type="term" value="P:temperature homeostasis"/>
    <property type="evidence" value="ECO:0007669"/>
    <property type="project" value="Ensembl"/>
</dbReference>
<dbReference type="InterPro" id="IPR001704">
    <property type="entry name" value="Orexin"/>
</dbReference>
<dbReference type="PANTHER" id="PTHR15173:SF2">
    <property type="entry name" value="HYPOCRETIN NEUROPEPTIDE PRECURSOR"/>
    <property type="match status" value="1"/>
</dbReference>
<dbReference type="PANTHER" id="PTHR15173">
    <property type="entry name" value="OREXIN"/>
    <property type="match status" value="1"/>
</dbReference>
<dbReference type="Pfam" id="PF02072">
    <property type="entry name" value="Orexin"/>
    <property type="match status" value="1"/>
</dbReference>
<dbReference type="PIRSF" id="PIRSF037824">
    <property type="entry name" value="Orexin"/>
    <property type="match status" value="1"/>
</dbReference>
<dbReference type="PRINTS" id="PR01091">
    <property type="entry name" value="OREXINPP"/>
</dbReference>
<keyword id="KW-0027">Amidation</keyword>
<keyword id="KW-0165">Cleavage on pair of basic residues</keyword>
<keyword id="KW-0968">Cytoplasmic vesicle</keyword>
<keyword id="KW-1015">Disulfide bond</keyword>
<keyword id="KW-0256">Endoplasmic reticulum</keyword>
<keyword id="KW-0527">Neuropeptide</keyword>
<keyword id="KW-0873">Pyrrolidone carboxylic acid</keyword>
<keyword id="KW-1185">Reference proteome</keyword>
<keyword id="KW-0732">Signal</keyword>
<keyword id="KW-0770">Synapse</keyword>
<name>OREX_MOUSE</name>
<proteinExistence type="evidence at transcript level"/>
<gene>
    <name type="primary">Hcrt</name>
    <name type="synonym">Ox</name>
    <name type="synonym">Ppox</name>
</gene>
<organism>
    <name type="scientific">Mus musculus</name>
    <name type="common">Mouse</name>
    <dbReference type="NCBI Taxonomy" id="10090"/>
    <lineage>
        <taxon>Eukaryota</taxon>
        <taxon>Metazoa</taxon>
        <taxon>Chordata</taxon>
        <taxon>Craniata</taxon>
        <taxon>Vertebrata</taxon>
        <taxon>Euteleostomi</taxon>
        <taxon>Mammalia</taxon>
        <taxon>Eutheria</taxon>
        <taxon>Euarchontoglires</taxon>
        <taxon>Glires</taxon>
        <taxon>Rodentia</taxon>
        <taxon>Myomorpha</taxon>
        <taxon>Muroidea</taxon>
        <taxon>Muridae</taxon>
        <taxon>Murinae</taxon>
        <taxon>Mus</taxon>
        <taxon>Mus</taxon>
    </lineage>
</organism>
<sequence>MNFPSTKVPWAAVTLLLLLLLPPALLSLGVDAQPLPDCCRQKTCSCRLYELLHGAGNHAAGILTLGKRRPGPPGLQGRLQRLLQANGNHAAGILTMGRRAGAELEPHPCSGRGCPTVTTTALAPRGGSGV</sequence>
<evidence type="ECO:0000250" key="1">
    <source>
        <dbReference type="UniProtKB" id="O55232"/>
    </source>
</evidence>
<evidence type="ECO:0000303" key="2">
    <source>
    </source>
</evidence>
<evidence type="ECO:0000303" key="3">
    <source>
    </source>
</evidence>
<evidence type="ECO:0000305" key="4"/>
<feature type="signal peptide" evidence="1">
    <location>
        <begin position="1"/>
        <end position="32"/>
    </location>
</feature>
<feature type="peptide" id="PRO_0000020264" description="Orexin-A">
    <location>
        <begin position="33"/>
        <end position="65"/>
    </location>
</feature>
<feature type="peptide" id="PRO_0000020265" description="Orexin-B">
    <location>
        <begin position="69"/>
        <end position="96"/>
    </location>
</feature>
<feature type="propeptide" id="PRO_0000020266">
    <location>
        <begin position="97"/>
        <end position="130"/>
    </location>
</feature>
<feature type="modified residue" description="Pyrrolidone carboxylic acid" evidence="1">
    <location>
        <position position="33"/>
    </location>
</feature>
<feature type="modified residue" description="Leucine amide" evidence="1">
    <location>
        <position position="65"/>
    </location>
</feature>
<feature type="modified residue" description="Methionine amide" evidence="1">
    <location>
        <position position="96"/>
    </location>
</feature>
<feature type="disulfide bond" evidence="1">
    <location>
        <begin position="38"/>
        <end position="44"/>
    </location>
</feature>
<feature type="disulfide bond" evidence="1">
    <location>
        <begin position="39"/>
        <end position="46"/>
    </location>
</feature>
<accession>O55241</accession>